<accession>Q6BH22</accession>
<reference key="1">
    <citation type="journal article" date="2004" name="Nature">
        <title>Genome evolution in yeasts.</title>
        <authorList>
            <person name="Dujon B."/>
            <person name="Sherman D."/>
            <person name="Fischer G."/>
            <person name="Durrens P."/>
            <person name="Casaregola S."/>
            <person name="Lafontaine I."/>
            <person name="de Montigny J."/>
            <person name="Marck C."/>
            <person name="Neuveglise C."/>
            <person name="Talla E."/>
            <person name="Goffard N."/>
            <person name="Frangeul L."/>
            <person name="Aigle M."/>
            <person name="Anthouard V."/>
            <person name="Babour A."/>
            <person name="Barbe V."/>
            <person name="Barnay S."/>
            <person name="Blanchin S."/>
            <person name="Beckerich J.-M."/>
            <person name="Beyne E."/>
            <person name="Bleykasten C."/>
            <person name="Boisrame A."/>
            <person name="Boyer J."/>
            <person name="Cattolico L."/>
            <person name="Confanioleri F."/>
            <person name="de Daruvar A."/>
            <person name="Despons L."/>
            <person name="Fabre E."/>
            <person name="Fairhead C."/>
            <person name="Ferry-Dumazet H."/>
            <person name="Groppi A."/>
            <person name="Hantraye F."/>
            <person name="Hennequin C."/>
            <person name="Jauniaux N."/>
            <person name="Joyet P."/>
            <person name="Kachouri R."/>
            <person name="Kerrest A."/>
            <person name="Koszul R."/>
            <person name="Lemaire M."/>
            <person name="Lesur I."/>
            <person name="Ma L."/>
            <person name="Muller H."/>
            <person name="Nicaud J.-M."/>
            <person name="Nikolski M."/>
            <person name="Oztas S."/>
            <person name="Ozier-Kalogeropoulos O."/>
            <person name="Pellenz S."/>
            <person name="Potier S."/>
            <person name="Richard G.-F."/>
            <person name="Straub M.-L."/>
            <person name="Suleau A."/>
            <person name="Swennen D."/>
            <person name="Tekaia F."/>
            <person name="Wesolowski-Louvel M."/>
            <person name="Westhof E."/>
            <person name="Wirth B."/>
            <person name="Zeniou-Meyer M."/>
            <person name="Zivanovic Y."/>
            <person name="Bolotin-Fukuhara M."/>
            <person name="Thierry A."/>
            <person name="Bouchier C."/>
            <person name="Caudron B."/>
            <person name="Scarpelli C."/>
            <person name="Gaillardin C."/>
            <person name="Weissenbach J."/>
            <person name="Wincker P."/>
            <person name="Souciet J.-L."/>
        </authorList>
    </citation>
    <scope>NUCLEOTIDE SEQUENCE [LARGE SCALE GENOMIC DNA]</scope>
    <source>
        <strain>ATCC 36239 / CBS 767 / BCRC 21394 / JCM 1990 / NBRC 0083 / IGC 2968</strain>
    </source>
</reference>
<feature type="chain" id="PRO_0000320442" description="Translation machinery-associated protein 22">
    <location>
        <begin position="1"/>
        <end position="189"/>
    </location>
</feature>
<feature type="domain" description="SUI1" evidence="2">
    <location>
        <begin position="94"/>
        <end position="165"/>
    </location>
</feature>
<organism>
    <name type="scientific">Debaryomyces hansenii (strain ATCC 36239 / CBS 767 / BCRC 21394 / JCM 1990 / NBRC 0083 / IGC 2968)</name>
    <name type="common">Yeast</name>
    <name type="synonym">Torulaspora hansenii</name>
    <dbReference type="NCBI Taxonomy" id="284592"/>
    <lineage>
        <taxon>Eukaryota</taxon>
        <taxon>Fungi</taxon>
        <taxon>Dikarya</taxon>
        <taxon>Ascomycota</taxon>
        <taxon>Saccharomycotina</taxon>
        <taxon>Pichiomycetes</taxon>
        <taxon>Debaryomycetaceae</taxon>
        <taxon>Debaryomyces</taxon>
    </lineage>
</organism>
<dbReference type="EMBL" id="CR382139">
    <property type="protein sequence ID" value="CAG91009.1"/>
    <property type="molecule type" value="Genomic_DNA"/>
</dbReference>
<dbReference type="RefSeq" id="XP_462499.1">
    <property type="nucleotide sequence ID" value="XM_462499.1"/>
</dbReference>
<dbReference type="SMR" id="Q6BH22"/>
<dbReference type="FunCoup" id="Q6BH22">
    <property type="interactions" value="1262"/>
</dbReference>
<dbReference type="STRING" id="284592.Q6BH22"/>
<dbReference type="GeneID" id="2905449"/>
<dbReference type="KEGG" id="dha:DEHA2G21978g"/>
<dbReference type="VEuPathDB" id="FungiDB:DEHA2G21978g"/>
<dbReference type="eggNOG" id="KOG3239">
    <property type="taxonomic scope" value="Eukaryota"/>
</dbReference>
<dbReference type="HOGENOM" id="CLU_073511_0_1_1"/>
<dbReference type="InParanoid" id="Q6BH22"/>
<dbReference type="OMA" id="EVFEIDM"/>
<dbReference type="OrthoDB" id="277199at2759"/>
<dbReference type="Proteomes" id="UP000000599">
    <property type="component" value="Chromosome G"/>
</dbReference>
<dbReference type="GO" id="GO:0005737">
    <property type="term" value="C:cytoplasm"/>
    <property type="evidence" value="ECO:0007669"/>
    <property type="project" value="UniProtKB-SubCell"/>
</dbReference>
<dbReference type="GO" id="GO:1990904">
    <property type="term" value="C:ribonucleoprotein complex"/>
    <property type="evidence" value="ECO:0007669"/>
    <property type="project" value="UniProtKB-KW"/>
</dbReference>
<dbReference type="GO" id="GO:0005840">
    <property type="term" value="C:ribosome"/>
    <property type="evidence" value="ECO:0007669"/>
    <property type="project" value="UniProtKB-KW"/>
</dbReference>
<dbReference type="GO" id="GO:0003729">
    <property type="term" value="F:mRNA binding"/>
    <property type="evidence" value="ECO:0007669"/>
    <property type="project" value="TreeGrafter"/>
</dbReference>
<dbReference type="GO" id="GO:0003743">
    <property type="term" value="F:translation initiation factor activity"/>
    <property type="evidence" value="ECO:0007669"/>
    <property type="project" value="InterPro"/>
</dbReference>
<dbReference type="GO" id="GO:0001731">
    <property type="term" value="P:formation of translation preinitiation complex"/>
    <property type="evidence" value="ECO:0007669"/>
    <property type="project" value="TreeGrafter"/>
</dbReference>
<dbReference type="GO" id="GO:0002188">
    <property type="term" value="P:translation reinitiation"/>
    <property type="evidence" value="ECO:0007669"/>
    <property type="project" value="TreeGrafter"/>
</dbReference>
<dbReference type="CDD" id="cd11607">
    <property type="entry name" value="DENR_C"/>
    <property type="match status" value="1"/>
</dbReference>
<dbReference type="Gene3D" id="3.30.780.10">
    <property type="entry name" value="SUI1-like domain"/>
    <property type="match status" value="1"/>
</dbReference>
<dbReference type="InterPro" id="IPR050318">
    <property type="entry name" value="DENR/SUI1_TIF"/>
</dbReference>
<dbReference type="InterPro" id="IPR046447">
    <property type="entry name" value="DENR_C"/>
</dbReference>
<dbReference type="InterPro" id="IPR005873">
    <property type="entry name" value="DENR_eukaryotes"/>
</dbReference>
<dbReference type="InterPro" id="IPR048517">
    <property type="entry name" value="DENR_N"/>
</dbReference>
<dbReference type="InterPro" id="IPR001950">
    <property type="entry name" value="SUI1"/>
</dbReference>
<dbReference type="InterPro" id="IPR036877">
    <property type="entry name" value="SUI1_dom_sf"/>
</dbReference>
<dbReference type="NCBIfam" id="TIGR01159">
    <property type="entry name" value="DRP1"/>
    <property type="match status" value="1"/>
</dbReference>
<dbReference type="PANTHER" id="PTHR12789:SF0">
    <property type="entry name" value="DENSITY-REGULATED PROTEIN"/>
    <property type="match status" value="1"/>
</dbReference>
<dbReference type="PANTHER" id="PTHR12789">
    <property type="entry name" value="DENSITY-REGULATED PROTEIN HOMOLOG"/>
    <property type="match status" value="1"/>
</dbReference>
<dbReference type="Pfam" id="PF21023">
    <property type="entry name" value="DENR_N"/>
    <property type="match status" value="1"/>
</dbReference>
<dbReference type="Pfam" id="PF01253">
    <property type="entry name" value="SUI1"/>
    <property type="match status" value="1"/>
</dbReference>
<dbReference type="SUPFAM" id="SSF55159">
    <property type="entry name" value="eIF1-like"/>
    <property type="match status" value="1"/>
</dbReference>
<dbReference type="PROSITE" id="PS50296">
    <property type="entry name" value="SUI1"/>
    <property type="match status" value="1"/>
</dbReference>
<proteinExistence type="inferred from homology"/>
<evidence type="ECO:0000250" key="1"/>
<evidence type="ECO:0000255" key="2">
    <source>
        <dbReference type="PROSITE-ProRule" id="PRU00200"/>
    </source>
</evidence>
<evidence type="ECO:0000305" key="3"/>
<sequence>MTEVLPKNIEYCEVCTFPPEYCEFGLSFKRCKEWLQENQPELFEKLYSADALANATSTLSLEKEQKISQEMEKKQAKEEAKLERELQKKLSSKVTIKRIERNKRKHVISISGLEVFNIDMKKLAKTFASKFATGASVTKNAEKKDEIIVQGDVSDEAKDYIEKLLQEKALDEVKVEQIDEKKKKKPPAP</sequence>
<gene>
    <name type="primary">TMA22</name>
    <name type="ordered locus">DEHA2G21978g</name>
</gene>
<protein>
    <recommendedName>
        <fullName>Translation machinery-associated protein 22</fullName>
    </recommendedName>
</protein>
<comment type="subunit">
    <text evidence="1">Interacts with the 40S ribosomal subunit.</text>
</comment>
<comment type="subcellular location">
    <subcellularLocation>
        <location evidence="1">Cytoplasm</location>
    </subcellularLocation>
</comment>
<comment type="domain">
    <text>The SUI1 domain may be involved in RNA binding.</text>
</comment>
<comment type="similarity">
    <text evidence="3">Belongs to the DENR family.</text>
</comment>
<name>DENR_DEBHA</name>
<keyword id="KW-0963">Cytoplasm</keyword>
<keyword id="KW-1185">Reference proteome</keyword>
<keyword id="KW-0687">Ribonucleoprotein</keyword>
<keyword id="KW-0689">Ribosomal protein</keyword>